<accession>A9WD80</accession>
<proteinExistence type="inferred from homology"/>
<reference key="1">
    <citation type="journal article" date="2011" name="BMC Genomics">
        <title>Complete genome sequence of the filamentous anoxygenic phototrophic bacterium Chloroflexus aurantiacus.</title>
        <authorList>
            <person name="Tang K.H."/>
            <person name="Barry K."/>
            <person name="Chertkov O."/>
            <person name="Dalin E."/>
            <person name="Han C.S."/>
            <person name="Hauser L.J."/>
            <person name="Honchak B.M."/>
            <person name="Karbach L.E."/>
            <person name="Land M.L."/>
            <person name="Lapidus A."/>
            <person name="Larimer F.W."/>
            <person name="Mikhailova N."/>
            <person name="Pitluck S."/>
            <person name="Pierson B.K."/>
            <person name="Blankenship R.E."/>
        </authorList>
    </citation>
    <scope>NUCLEOTIDE SEQUENCE [LARGE SCALE GENOMIC DNA]</scope>
    <source>
        <strain>ATCC 29366 / DSM 635 / J-10-fl</strain>
    </source>
</reference>
<gene>
    <name evidence="1" type="primary">hisF</name>
    <name type="ordered locus">Caur_1830</name>
</gene>
<keyword id="KW-0028">Amino-acid biosynthesis</keyword>
<keyword id="KW-0963">Cytoplasm</keyword>
<keyword id="KW-0368">Histidine biosynthesis</keyword>
<keyword id="KW-0456">Lyase</keyword>
<keyword id="KW-1185">Reference proteome</keyword>
<feature type="chain" id="PRO_1000084053" description="Imidazole glycerol phosphate synthase subunit HisF">
    <location>
        <begin position="1"/>
        <end position="259"/>
    </location>
</feature>
<feature type="active site" evidence="1">
    <location>
        <position position="11"/>
    </location>
</feature>
<feature type="active site" evidence="1">
    <location>
        <position position="130"/>
    </location>
</feature>
<protein>
    <recommendedName>
        <fullName evidence="1">Imidazole glycerol phosphate synthase subunit HisF</fullName>
        <ecNumber evidence="1">4.3.2.10</ecNumber>
    </recommendedName>
    <alternativeName>
        <fullName evidence="1">IGP synthase cyclase subunit</fullName>
    </alternativeName>
    <alternativeName>
        <fullName evidence="1">IGP synthase subunit HisF</fullName>
    </alternativeName>
    <alternativeName>
        <fullName evidence="1">ImGP synthase subunit HisF</fullName>
        <shortName evidence="1">IGPS subunit HisF</shortName>
    </alternativeName>
</protein>
<sequence>MLTRRIIPCLDVKAGRVVKGVKFLNHRDAGDPVELAAAYNAAGADELVFYDITASSDERAIMVEVVERTAAEVFIPLTVGGGLRSVDDMYRMLRAGADKVSLNTAAVYNPQLIAEGARRFGSQCIVLSVDAKRVNAPGEPPRWEVFTHTGANPRPTGLDAIEWIKRGIDLGAGEICINSMDADGARTGYDLELLQAITAISPVPVIASGGVGSPHDMYRGIVEGGADAVLAASIFHFGDYSVADVKRYLAERGVAVRMI</sequence>
<evidence type="ECO:0000255" key="1">
    <source>
        <dbReference type="HAMAP-Rule" id="MF_01013"/>
    </source>
</evidence>
<organism>
    <name type="scientific">Chloroflexus aurantiacus (strain ATCC 29366 / DSM 635 / J-10-fl)</name>
    <dbReference type="NCBI Taxonomy" id="324602"/>
    <lineage>
        <taxon>Bacteria</taxon>
        <taxon>Bacillati</taxon>
        <taxon>Chloroflexota</taxon>
        <taxon>Chloroflexia</taxon>
        <taxon>Chloroflexales</taxon>
        <taxon>Chloroflexineae</taxon>
        <taxon>Chloroflexaceae</taxon>
        <taxon>Chloroflexus</taxon>
    </lineage>
</organism>
<name>HIS6_CHLAA</name>
<comment type="function">
    <text evidence="1">IGPS catalyzes the conversion of PRFAR and glutamine to IGP, AICAR and glutamate. The HisF subunit catalyzes the cyclization activity that produces IGP and AICAR from PRFAR using the ammonia provided by the HisH subunit.</text>
</comment>
<comment type="catalytic activity">
    <reaction evidence="1">
        <text>5-[(5-phospho-1-deoxy-D-ribulos-1-ylimino)methylamino]-1-(5-phospho-beta-D-ribosyl)imidazole-4-carboxamide + L-glutamine = D-erythro-1-(imidazol-4-yl)glycerol 3-phosphate + 5-amino-1-(5-phospho-beta-D-ribosyl)imidazole-4-carboxamide + L-glutamate + H(+)</text>
        <dbReference type="Rhea" id="RHEA:24793"/>
        <dbReference type="ChEBI" id="CHEBI:15378"/>
        <dbReference type="ChEBI" id="CHEBI:29985"/>
        <dbReference type="ChEBI" id="CHEBI:58278"/>
        <dbReference type="ChEBI" id="CHEBI:58359"/>
        <dbReference type="ChEBI" id="CHEBI:58475"/>
        <dbReference type="ChEBI" id="CHEBI:58525"/>
        <dbReference type="EC" id="4.3.2.10"/>
    </reaction>
</comment>
<comment type="pathway">
    <text evidence="1">Amino-acid biosynthesis; L-histidine biosynthesis; L-histidine from 5-phospho-alpha-D-ribose 1-diphosphate: step 5/9.</text>
</comment>
<comment type="subunit">
    <text evidence="1">Heterodimer of HisH and HisF.</text>
</comment>
<comment type="subcellular location">
    <subcellularLocation>
        <location evidence="1">Cytoplasm</location>
    </subcellularLocation>
</comment>
<comment type="similarity">
    <text evidence="1">Belongs to the HisA/HisF family.</text>
</comment>
<dbReference type="EC" id="4.3.2.10" evidence="1"/>
<dbReference type="EMBL" id="CP000909">
    <property type="protein sequence ID" value="ABY35047.1"/>
    <property type="molecule type" value="Genomic_DNA"/>
</dbReference>
<dbReference type="RefSeq" id="WP_012257701.1">
    <property type="nucleotide sequence ID" value="NC_010175.1"/>
</dbReference>
<dbReference type="RefSeq" id="YP_001635436.1">
    <property type="nucleotide sequence ID" value="NC_010175.1"/>
</dbReference>
<dbReference type="SMR" id="A9WD80"/>
<dbReference type="FunCoup" id="A9WD80">
    <property type="interactions" value="467"/>
</dbReference>
<dbReference type="STRING" id="324602.Caur_1830"/>
<dbReference type="EnsemblBacteria" id="ABY35047">
    <property type="protein sequence ID" value="ABY35047"/>
    <property type="gene ID" value="Caur_1830"/>
</dbReference>
<dbReference type="KEGG" id="cau:Caur_1830"/>
<dbReference type="PATRIC" id="fig|324602.8.peg.2089"/>
<dbReference type="eggNOG" id="COG0107">
    <property type="taxonomic scope" value="Bacteria"/>
</dbReference>
<dbReference type="HOGENOM" id="CLU_048577_4_0_0"/>
<dbReference type="InParanoid" id="A9WD80"/>
<dbReference type="UniPathway" id="UPA00031">
    <property type="reaction ID" value="UER00010"/>
</dbReference>
<dbReference type="Proteomes" id="UP000002008">
    <property type="component" value="Chromosome"/>
</dbReference>
<dbReference type="GO" id="GO:0005737">
    <property type="term" value="C:cytoplasm"/>
    <property type="evidence" value="ECO:0007669"/>
    <property type="project" value="UniProtKB-SubCell"/>
</dbReference>
<dbReference type="GO" id="GO:0000107">
    <property type="term" value="F:imidazoleglycerol-phosphate synthase activity"/>
    <property type="evidence" value="ECO:0000318"/>
    <property type="project" value="GO_Central"/>
</dbReference>
<dbReference type="GO" id="GO:0016829">
    <property type="term" value="F:lyase activity"/>
    <property type="evidence" value="ECO:0007669"/>
    <property type="project" value="UniProtKB-KW"/>
</dbReference>
<dbReference type="GO" id="GO:0000105">
    <property type="term" value="P:L-histidine biosynthetic process"/>
    <property type="evidence" value="ECO:0007669"/>
    <property type="project" value="UniProtKB-UniRule"/>
</dbReference>
<dbReference type="CDD" id="cd04731">
    <property type="entry name" value="HisF"/>
    <property type="match status" value="1"/>
</dbReference>
<dbReference type="FunFam" id="3.20.20.70:FF:000006">
    <property type="entry name" value="Imidazole glycerol phosphate synthase subunit HisF"/>
    <property type="match status" value="1"/>
</dbReference>
<dbReference type="Gene3D" id="3.20.20.70">
    <property type="entry name" value="Aldolase class I"/>
    <property type="match status" value="1"/>
</dbReference>
<dbReference type="HAMAP" id="MF_01013">
    <property type="entry name" value="HisF"/>
    <property type="match status" value="1"/>
</dbReference>
<dbReference type="InterPro" id="IPR013785">
    <property type="entry name" value="Aldolase_TIM"/>
</dbReference>
<dbReference type="InterPro" id="IPR006062">
    <property type="entry name" value="His_biosynth"/>
</dbReference>
<dbReference type="InterPro" id="IPR004651">
    <property type="entry name" value="HisF"/>
</dbReference>
<dbReference type="InterPro" id="IPR050064">
    <property type="entry name" value="IGPS_HisA/HisF"/>
</dbReference>
<dbReference type="InterPro" id="IPR011060">
    <property type="entry name" value="RibuloseP-bd_barrel"/>
</dbReference>
<dbReference type="NCBIfam" id="TIGR00735">
    <property type="entry name" value="hisF"/>
    <property type="match status" value="1"/>
</dbReference>
<dbReference type="PANTHER" id="PTHR21235:SF2">
    <property type="entry name" value="IMIDAZOLE GLYCEROL PHOSPHATE SYNTHASE HISHF"/>
    <property type="match status" value="1"/>
</dbReference>
<dbReference type="PANTHER" id="PTHR21235">
    <property type="entry name" value="IMIDAZOLE GLYCEROL PHOSPHATE SYNTHASE SUBUNIT HISF/H IGP SYNTHASE SUBUNIT HISF/H"/>
    <property type="match status" value="1"/>
</dbReference>
<dbReference type="Pfam" id="PF00977">
    <property type="entry name" value="His_biosynth"/>
    <property type="match status" value="1"/>
</dbReference>
<dbReference type="SUPFAM" id="SSF51366">
    <property type="entry name" value="Ribulose-phoshate binding barrel"/>
    <property type="match status" value="1"/>
</dbReference>